<accession>A9W4S9</accession>
<reference key="1">
    <citation type="submission" date="2007-12" db="EMBL/GenBank/DDBJ databases">
        <title>Complete sequence of Methylobacterium extorquens PA1.</title>
        <authorList>
            <consortium name="US DOE Joint Genome Institute"/>
            <person name="Copeland A."/>
            <person name="Lucas S."/>
            <person name="Lapidus A."/>
            <person name="Barry K."/>
            <person name="Glavina del Rio T."/>
            <person name="Dalin E."/>
            <person name="Tice H."/>
            <person name="Pitluck S."/>
            <person name="Saunders E."/>
            <person name="Brettin T."/>
            <person name="Bruce D."/>
            <person name="Detter J.C."/>
            <person name="Han C."/>
            <person name="Schmutz J."/>
            <person name="Larimer F."/>
            <person name="Land M."/>
            <person name="Hauser L."/>
            <person name="Kyrpides N."/>
            <person name="Kim E."/>
            <person name="Marx C."/>
            <person name="Richardson P."/>
        </authorList>
    </citation>
    <scope>NUCLEOTIDE SEQUENCE [LARGE SCALE GENOMIC DNA]</scope>
    <source>
        <strain>PA1</strain>
    </source>
</reference>
<sequence length="104" mass="11215">MAAKIKKGDTVVVLTGRDAGRSGEVIQVMPKEDKAFVRGVNLVKKHQRQTQNQEGGIISKEAAIQLSNIAVADANGKPTRVGFRILDDGRKVRFAKTTGDQIDG</sequence>
<evidence type="ECO:0000255" key="1">
    <source>
        <dbReference type="HAMAP-Rule" id="MF_01326"/>
    </source>
</evidence>
<evidence type="ECO:0000305" key="2"/>
<protein>
    <recommendedName>
        <fullName evidence="1">Large ribosomal subunit protein uL24</fullName>
    </recommendedName>
    <alternativeName>
        <fullName evidence="2">50S ribosomal protein L24</fullName>
    </alternativeName>
</protein>
<name>RL24_METEP</name>
<comment type="function">
    <text evidence="1">One of two assembly initiator proteins, it binds directly to the 5'-end of the 23S rRNA, where it nucleates assembly of the 50S subunit.</text>
</comment>
<comment type="function">
    <text evidence="1">One of the proteins that surrounds the polypeptide exit tunnel on the outside of the subunit.</text>
</comment>
<comment type="subunit">
    <text evidence="1">Part of the 50S ribosomal subunit.</text>
</comment>
<comment type="similarity">
    <text evidence="1">Belongs to the universal ribosomal protein uL24 family.</text>
</comment>
<dbReference type="EMBL" id="CP000908">
    <property type="protein sequence ID" value="ABY30585.1"/>
    <property type="molecule type" value="Genomic_DNA"/>
</dbReference>
<dbReference type="RefSeq" id="WP_003597143.1">
    <property type="nucleotide sequence ID" value="NC_010172.1"/>
</dbReference>
<dbReference type="SMR" id="A9W4S9"/>
<dbReference type="GeneID" id="72989878"/>
<dbReference type="KEGG" id="mex:Mext_2190"/>
<dbReference type="eggNOG" id="COG0198">
    <property type="taxonomic scope" value="Bacteria"/>
</dbReference>
<dbReference type="HOGENOM" id="CLU_093315_2_2_5"/>
<dbReference type="BioCyc" id="MEXT419610:MEXT_RS11055-MONOMER"/>
<dbReference type="GO" id="GO:1990904">
    <property type="term" value="C:ribonucleoprotein complex"/>
    <property type="evidence" value="ECO:0007669"/>
    <property type="project" value="UniProtKB-KW"/>
</dbReference>
<dbReference type="GO" id="GO:0005840">
    <property type="term" value="C:ribosome"/>
    <property type="evidence" value="ECO:0007669"/>
    <property type="project" value="UniProtKB-KW"/>
</dbReference>
<dbReference type="GO" id="GO:0019843">
    <property type="term" value="F:rRNA binding"/>
    <property type="evidence" value="ECO:0007669"/>
    <property type="project" value="UniProtKB-UniRule"/>
</dbReference>
<dbReference type="GO" id="GO:0003735">
    <property type="term" value="F:structural constituent of ribosome"/>
    <property type="evidence" value="ECO:0007669"/>
    <property type="project" value="InterPro"/>
</dbReference>
<dbReference type="GO" id="GO:0006412">
    <property type="term" value="P:translation"/>
    <property type="evidence" value="ECO:0007669"/>
    <property type="project" value="UniProtKB-UniRule"/>
</dbReference>
<dbReference type="CDD" id="cd06089">
    <property type="entry name" value="KOW_RPL26"/>
    <property type="match status" value="1"/>
</dbReference>
<dbReference type="FunFam" id="2.30.30.30:FF:000004">
    <property type="entry name" value="50S ribosomal protein L24"/>
    <property type="match status" value="1"/>
</dbReference>
<dbReference type="Gene3D" id="2.30.30.30">
    <property type="match status" value="1"/>
</dbReference>
<dbReference type="HAMAP" id="MF_01326_B">
    <property type="entry name" value="Ribosomal_uL24_B"/>
    <property type="match status" value="1"/>
</dbReference>
<dbReference type="InterPro" id="IPR005824">
    <property type="entry name" value="KOW"/>
</dbReference>
<dbReference type="InterPro" id="IPR014722">
    <property type="entry name" value="Rib_uL2_dom2"/>
</dbReference>
<dbReference type="InterPro" id="IPR003256">
    <property type="entry name" value="Ribosomal_uL24"/>
</dbReference>
<dbReference type="InterPro" id="IPR005825">
    <property type="entry name" value="Ribosomal_uL24_CS"/>
</dbReference>
<dbReference type="InterPro" id="IPR041988">
    <property type="entry name" value="Ribosomal_uL24_KOW"/>
</dbReference>
<dbReference type="InterPro" id="IPR008991">
    <property type="entry name" value="Translation_prot_SH3-like_sf"/>
</dbReference>
<dbReference type="NCBIfam" id="TIGR01079">
    <property type="entry name" value="rplX_bact"/>
    <property type="match status" value="1"/>
</dbReference>
<dbReference type="PANTHER" id="PTHR12903">
    <property type="entry name" value="MITOCHONDRIAL RIBOSOMAL PROTEIN L24"/>
    <property type="match status" value="1"/>
</dbReference>
<dbReference type="Pfam" id="PF00467">
    <property type="entry name" value="KOW"/>
    <property type="match status" value="1"/>
</dbReference>
<dbReference type="Pfam" id="PF17136">
    <property type="entry name" value="ribosomal_L24"/>
    <property type="match status" value="1"/>
</dbReference>
<dbReference type="SMART" id="SM00739">
    <property type="entry name" value="KOW"/>
    <property type="match status" value="1"/>
</dbReference>
<dbReference type="SUPFAM" id="SSF50104">
    <property type="entry name" value="Translation proteins SH3-like domain"/>
    <property type="match status" value="1"/>
</dbReference>
<dbReference type="PROSITE" id="PS01108">
    <property type="entry name" value="RIBOSOMAL_L24"/>
    <property type="match status" value="1"/>
</dbReference>
<gene>
    <name evidence="1" type="primary">rplX</name>
    <name type="ordered locus">Mext_2190</name>
</gene>
<feature type="chain" id="PRO_1000142013" description="Large ribosomal subunit protein uL24">
    <location>
        <begin position="1"/>
        <end position="104"/>
    </location>
</feature>
<organism>
    <name type="scientific">Methylorubrum extorquens (strain PA1)</name>
    <name type="common">Methylobacterium extorquens</name>
    <dbReference type="NCBI Taxonomy" id="419610"/>
    <lineage>
        <taxon>Bacteria</taxon>
        <taxon>Pseudomonadati</taxon>
        <taxon>Pseudomonadota</taxon>
        <taxon>Alphaproteobacteria</taxon>
        <taxon>Hyphomicrobiales</taxon>
        <taxon>Methylobacteriaceae</taxon>
        <taxon>Methylorubrum</taxon>
    </lineage>
</organism>
<keyword id="KW-0687">Ribonucleoprotein</keyword>
<keyword id="KW-0689">Ribosomal protein</keyword>
<keyword id="KW-0694">RNA-binding</keyword>
<keyword id="KW-0699">rRNA-binding</keyword>
<proteinExistence type="inferred from homology"/>